<evidence type="ECO:0000250" key="1"/>
<evidence type="ECO:0000305" key="2"/>
<dbReference type="EC" id="3.1.3.11"/>
<dbReference type="EMBL" id="X76946">
    <property type="protein sequence ID" value="CAA54265.1"/>
    <property type="molecule type" value="mRNA"/>
</dbReference>
<dbReference type="PIR" id="S41287">
    <property type="entry name" value="S41287"/>
</dbReference>
<dbReference type="RefSeq" id="NP_001274842.1">
    <property type="nucleotide sequence ID" value="NM_001287913.1"/>
</dbReference>
<dbReference type="SMR" id="P46276"/>
<dbReference type="FunCoup" id="P46276">
    <property type="interactions" value="2121"/>
</dbReference>
<dbReference type="STRING" id="4113.P46276"/>
<dbReference type="PaxDb" id="4113-PGSC0003DMT400061951"/>
<dbReference type="GeneID" id="102588954"/>
<dbReference type="KEGG" id="sot:102588954"/>
<dbReference type="eggNOG" id="KOG1458">
    <property type="taxonomic scope" value="Eukaryota"/>
</dbReference>
<dbReference type="InParanoid" id="P46276"/>
<dbReference type="OrthoDB" id="10256725at2759"/>
<dbReference type="Proteomes" id="UP000011115">
    <property type="component" value="Unassembled WGS sequence"/>
</dbReference>
<dbReference type="ExpressionAtlas" id="P46276">
    <property type="expression patterns" value="baseline and differential"/>
</dbReference>
<dbReference type="GO" id="GO:0005737">
    <property type="term" value="C:cytoplasm"/>
    <property type="evidence" value="ECO:0000318"/>
    <property type="project" value="GO_Central"/>
</dbReference>
<dbReference type="GO" id="GO:0005829">
    <property type="term" value="C:cytosol"/>
    <property type="evidence" value="ECO:0000318"/>
    <property type="project" value="GO_Central"/>
</dbReference>
<dbReference type="GO" id="GO:0042132">
    <property type="term" value="F:fructose 1,6-bisphosphate 1-phosphatase activity"/>
    <property type="evidence" value="ECO:0000318"/>
    <property type="project" value="GO_Central"/>
</dbReference>
<dbReference type="GO" id="GO:0046872">
    <property type="term" value="F:metal ion binding"/>
    <property type="evidence" value="ECO:0007669"/>
    <property type="project" value="UniProtKB-KW"/>
</dbReference>
<dbReference type="GO" id="GO:0030388">
    <property type="term" value="P:fructose 1,6-bisphosphate metabolic process"/>
    <property type="evidence" value="ECO:0000318"/>
    <property type="project" value="GO_Central"/>
</dbReference>
<dbReference type="GO" id="GO:0006002">
    <property type="term" value="P:fructose 6-phosphate metabolic process"/>
    <property type="evidence" value="ECO:0000318"/>
    <property type="project" value="GO_Central"/>
</dbReference>
<dbReference type="GO" id="GO:0006000">
    <property type="term" value="P:fructose metabolic process"/>
    <property type="evidence" value="ECO:0000318"/>
    <property type="project" value="GO_Central"/>
</dbReference>
<dbReference type="GO" id="GO:0006094">
    <property type="term" value="P:gluconeogenesis"/>
    <property type="evidence" value="ECO:0000318"/>
    <property type="project" value="GO_Central"/>
</dbReference>
<dbReference type="CDD" id="cd00354">
    <property type="entry name" value="FBPase"/>
    <property type="match status" value="1"/>
</dbReference>
<dbReference type="FunFam" id="3.40.190.80:FF:000001">
    <property type="entry name" value="Fructose-1,6-bisphosphatase class 1"/>
    <property type="match status" value="1"/>
</dbReference>
<dbReference type="FunFam" id="3.30.540.10:FF:000008">
    <property type="entry name" value="Fructose-1,6-bisphosphatase, cytosolic"/>
    <property type="match status" value="1"/>
</dbReference>
<dbReference type="Gene3D" id="3.40.190.80">
    <property type="match status" value="1"/>
</dbReference>
<dbReference type="Gene3D" id="3.30.540.10">
    <property type="entry name" value="Fructose-1,6-Bisphosphatase, subunit A, domain 1"/>
    <property type="match status" value="1"/>
</dbReference>
<dbReference type="HAMAP" id="MF_01855">
    <property type="entry name" value="FBPase_class1"/>
    <property type="match status" value="1"/>
</dbReference>
<dbReference type="InterPro" id="IPR044015">
    <property type="entry name" value="FBPase_C_dom"/>
</dbReference>
<dbReference type="InterPro" id="IPR000146">
    <property type="entry name" value="FBPase_class-1"/>
</dbReference>
<dbReference type="InterPro" id="IPR033391">
    <property type="entry name" value="FBPase_N"/>
</dbReference>
<dbReference type="InterPro" id="IPR028343">
    <property type="entry name" value="FBPtase"/>
</dbReference>
<dbReference type="InterPro" id="IPR020548">
    <property type="entry name" value="Fructose_bisphosphatase_AS"/>
</dbReference>
<dbReference type="NCBIfam" id="NF006778">
    <property type="entry name" value="PRK09293.1-1"/>
    <property type="match status" value="1"/>
</dbReference>
<dbReference type="NCBIfam" id="NF006779">
    <property type="entry name" value="PRK09293.1-3"/>
    <property type="match status" value="1"/>
</dbReference>
<dbReference type="PANTHER" id="PTHR11556:SF41">
    <property type="entry name" value="FRUCTOSE-1,6-BISPHOSPHATASE, CYTOSOLIC"/>
    <property type="match status" value="1"/>
</dbReference>
<dbReference type="PANTHER" id="PTHR11556">
    <property type="entry name" value="FRUCTOSE-1,6-BISPHOSPHATASE-RELATED"/>
    <property type="match status" value="1"/>
</dbReference>
<dbReference type="Pfam" id="PF00316">
    <property type="entry name" value="FBPase"/>
    <property type="match status" value="1"/>
</dbReference>
<dbReference type="Pfam" id="PF18913">
    <property type="entry name" value="FBPase_C"/>
    <property type="match status" value="1"/>
</dbReference>
<dbReference type="PIRSF" id="PIRSF500210">
    <property type="entry name" value="FBPtase"/>
    <property type="match status" value="1"/>
</dbReference>
<dbReference type="PIRSF" id="PIRSF000904">
    <property type="entry name" value="FBPtase_SBPase"/>
    <property type="match status" value="1"/>
</dbReference>
<dbReference type="PRINTS" id="PR00115">
    <property type="entry name" value="F16BPHPHTASE"/>
</dbReference>
<dbReference type="SUPFAM" id="SSF56655">
    <property type="entry name" value="Carbohydrate phosphatase"/>
    <property type="match status" value="1"/>
</dbReference>
<dbReference type="PROSITE" id="PS00124">
    <property type="entry name" value="FBPASE"/>
    <property type="match status" value="1"/>
</dbReference>
<accession>P46276</accession>
<keyword id="KW-0119">Carbohydrate metabolism</keyword>
<keyword id="KW-0963">Cytoplasm</keyword>
<keyword id="KW-0378">Hydrolase</keyword>
<keyword id="KW-0460">Magnesium</keyword>
<keyword id="KW-0479">Metal-binding</keyword>
<keyword id="KW-1185">Reference proteome</keyword>
<comment type="catalytic activity">
    <reaction>
        <text>beta-D-fructose 1,6-bisphosphate + H2O = beta-D-fructose 6-phosphate + phosphate</text>
        <dbReference type="Rhea" id="RHEA:11064"/>
        <dbReference type="ChEBI" id="CHEBI:15377"/>
        <dbReference type="ChEBI" id="CHEBI:32966"/>
        <dbReference type="ChEBI" id="CHEBI:43474"/>
        <dbReference type="ChEBI" id="CHEBI:57634"/>
        <dbReference type="EC" id="3.1.3.11"/>
    </reaction>
</comment>
<comment type="cofactor">
    <cofactor evidence="1">
        <name>Mg(2+)</name>
        <dbReference type="ChEBI" id="CHEBI:18420"/>
    </cofactor>
    <text evidence="1">Binds 3 Mg(2+) ions per subunit.</text>
</comment>
<comment type="subcellular location">
    <subcellularLocation>
        <location>Cytoplasm</location>
    </subcellularLocation>
</comment>
<comment type="miscellaneous">
    <text>In plants there are two FBPase isozymes: one in the cytosol and the other in the chloroplast.</text>
</comment>
<comment type="similarity">
    <text evidence="2">Belongs to the FBPase class 1 family.</text>
</comment>
<sequence length="340" mass="37311">MDHAADRHRTDLMTITRFVLNEQTKHPESRGDFSILLSHIVLGCKFVCTAVNKAGLAKLLGLAGETNVQGEDQKKLDVLSNEVFIKALVSSNRTCILVSEEDEEATFVRPANRGKYCVVFDPLDGSSNIDCGVSIGTIFGIYMIKDGHEPTLDDVLQPGMNMLAAGYCMYGSSCTLVLSTGSGVNGFTLDPSLGEFILTHPDIKIPKKGKIYSVNEGNAKNWDSPTSKYVQSCKYPADGSSPKSLRYIGSMVADVHRTLLYGGIFLYPGDKKSPNGKLRVLYEVFPMSFLMEQAGGQAFTGKQRALDLVPEKIHERSPIFLGSYDDVEEIKKLYAAEEQN</sequence>
<organism>
    <name type="scientific">Solanum tuberosum</name>
    <name type="common">Potato</name>
    <dbReference type="NCBI Taxonomy" id="4113"/>
    <lineage>
        <taxon>Eukaryota</taxon>
        <taxon>Viridiplantae</taxon>
        <taxon>Streptophyta</taxon>
        <taxon>Embryophyta</taxon>
        <taxon>Tracheophyta</taxon>
        <taxon>Spermatophyta</taxon>
        <taxon>Magnoliopsida</taxon>
        <taxon>eudicotyledons</taxon>
        <taxon>Gunneridae</taxon>
        <taxon>Pentapetalae</taxon>
        <taxon>asterids</taxon>
        <taxon>lamiids</taxon>
        <taxon>Solanales</taxon>
        <taxon>Solanaceae</taxon>
        <taxon>Solanoideae</taxon>
        <taxon>Solaneae</taxon>
        <taxon>Solanum</taxon>
    </lineage>
</organism>
<feature type="chain" id="PRO_0000200520" description="Fructose-1,6-bisphosphatase, cytosolic">
    <location>
        <begin position="1"/>
        <end position="340"/>
    </location>
</feature>
<feature type="binding site" evidence="1">
    <location>
        <position position="71"/>
    </location>
    <ligand>
        <name>Mg(2+)</name>
        <dbReference type="ChEBI" id="CHEBI:18420"/>
        <label>1</label>
    </ligand>
</feature>
<feature type="binding site" evidence="1">
    <location>
        <position position="100"/>
    </location>
    <ligand>
        <name>Mg(2+)</name>
        <dbReference type="ChEBI" id="CHEBI:18420"/>
        <label>1</label>
    </ligand>
</feature>
<feature type="binding site" evidence="1">
    <location>
        <position position="100"/>
    </location>
    <ligand>
        <name>Mg(2+)</name>
        <dbReference type="ChEBI" id="CHEBI:18420"/>
        <label>2</label>
    </ligand>
</feature>
<feature type="binding site" evidence="1">
    <location>
        <position position="121"/>
    </location>
    <ligand>
        <name>Mg(2+)</name>
        <dbReference type="ChEBI" id="CHEBI:18420"/>
        <label>2</label>
    </ligand>
</feature>
<feature type="binding site" evidence="1">
    <location>
        <position position="121"/>
    </location>
    <ligand>
        <name>Mg(2+)</name>
        <dbReference type="ChEBI" id="CHEBI:18420"/>
        <label>3</label>
    </ligand>
</feature>
<feature type="binding site" evidence="1">
    <location>
        <position position="123"/>
    </location>
    <ligand>
        <name>Mg(2+)</name>
        <dbReference type="ChEBI" id="CHEBI:18420"/>
        <label>2</label>
    </ligand>
</feature>
<feature type="binding site" evidence="1">
    <location>
        <begin position="124"/>
        <end position="127"/>
    </location>
    <ligand>
        <name>substrate</name>
    </ligand>
</feature>
<feature type="binding site" evidence="1">
    <location>
        <position position="124"/>
    </location>
    <ligand>
        <name>Mg(2+)</name>
        <dbReference type="ChEBI" id="CHEBI:18420"/>
        <label>3</label>
    </ligand>
</feature>
<feature type="binding site" evidence="1">
    <location>
        <position position="215"/>
    </location>
    <ligand>
        <name>substrate</name>
    </ligand>
</feature>
<feature type="binding site" evidence="1">
    <location>
        <position position="247"/>
    </location>
    <ligand>
        <name>substrate</name>
    </ligand>
</feature>
<feature type="binding site" evidence="1">
    <location>
        <position position="267"/>
    </location>
    <ligand>
        <name>substrate</name>
    </ligand>
</feature>
<feature type="binding site" evidence="1">
    <location>
        <position position="277"/>
    </location>
    <ligand>
        <name>substrate</name>
    </ligand>
</feature>
<feature type="binding site" evidence="1">
    <location>
        <position position="283"/>
    </location>
    <ligand>
        <name>Mg(2+)</name>
        <dbReference type="ChEBI" id="CHEBI:18420"/>
        <label>3</label>
    </ligand>
</feature>
<reference key="1">
    <citation type="journal article" date="1996" name="Plant J.">
        <title>Reduction of the cytosolic fructose-1,6-bisphosphatase in transgenic potato plants limits photosynthetic sucrose biosynthesis with no impact on plant growth and tuber yield.</title>
        <authorList>
            <person name="Zrenner R."/>
            <person name="Krause K.P."/>
            <person name="Apel P."/>
            <person name="Sonnewald U."/>
        </authorList>
    </citation>
    <scope>NUCLEOTIDE SEQUENCE [MRNA]</scope>
    <source>
        <strain>cv. Desiree</strain>
        <tissue>Leaf</tissue>
    </source>
</reference>
<name>F16P2_SOLTU</name>
<proteinExistence type="evidence at transcript level"/>
<protein>
    <recommendedName>
        <fullName>Fructose-1,6-bisphosphatase, cytosolic</fullName>
        <shortName>FBPase</shortName>
        <ecNumber>3.1.3.11</ecNumber>
    </recommendedName>
    <alternativeName>
        <fullName>CY-F1</fullName>
    </alternativeName>
    <alternativeName>
        <fullName>D-fructose-1,6-bisphosphate 1-phosphohydrolase</fullName>
    </alternativeName>
</protein>